<reference key="1">
    <citation type="submission" date="2008-10" db="EMBL/GenBank/DDBJ databases">
        <title>Genome sequence of Clostridium botulinum A2 Kyoto.</title>
        <authorList>
            <person name="Shrivastava S."/>
            <person name="Brinkac L.M."/>
            <person name="Brown J.L."/>
            <person name="Bruce D."/>
            <person name="Detter C.C."/>
            <person name="Johnson E.A."/>
            <person name="Munk C.A."/>
            <person name="Smith L.A."/>
            <person name="Smith T.J."/>
            <person name="Sutton G."/>
            <person name="Brettin T.S."/>
        </authorList>
    </citation>
    <scope>NUCLEOTIDE SEQUENCE [LARGE SCALE GENOMIC DNA]</scope>
    <source>
        <strain>Kyoto / Type A2</strain>
    </source>
</reference>
<feature type="chain" id="PRO_1000193242" description="Ribosome-binding factor A">
    <location>
        <begin position="1"/>
        <end position="120"/>
    </location>
</feature>
<sequence>MAKYRAGRINEEVKKEVSNIIHNDIKDPRLSAMVSVTDVNVTKDLKYAKVYVSIFGNEKAKEESLEALKSSVGFIRKEVGRRVKLRNTPEVIIEVDNSIERGMHIDELLHSIKENESNDN</sequence>
<protein>
    <recommendedName>
        <fullName evidence="1">Ribosome-binding factor A</fullName>
    </recommendedName>
</protein>
<keyword id="KW-0963">Cytoplasm</keyword>
<keyword id="KW-0690">Ribosome biogenesis</keyword>
<proteinExistence type="inferred from homology"/>
<organism>
    <name type="scientific">Clostridium botulinum (strain Kyoto / Type A2)</name>
    <dbReference type="NCBI Taxonomy" id="536232"/>
    <lineage>
        <taxon>Bacteria</taxon>
        <taxon>Bacillati</taxon>
        <taxon>Bacillota</taxon>
        <taxon>Clostridia</taxon>
        <taxon>Eubacteriales</taxon>
        <taxon>Clostridiaceae</taxon>
        <taxon>Clostridium</taxon>
    </lineage>
</organism>
<gene>
    <name evidence="1" type="primary">rbfA</name>
    <name type="ordered locus">CLM_2710</name>
</gene>
<dbReference type="EMBL" id="CP001581">
    <property type="protein sequence ID" value="ACO87122.1"/>
    <property type="molecule type" value="Genomic_DNA"/>
</dbReference>
<dbReference type="RefSeq" id="WP_011986791.1">
    <property type="nucleotide sequence ID" value="NC_012563.1"/>
</dbReference>
<dbReference type="SMR" id="C1FS58"/>
<dbReference type="GeneID" id="5204287"/>
<dbReference type="KEGG" id="cby:CLM_2710"/>
<dbReference type="eggNOG" id="COG0858">
    <property type="taxonomic scope" value="Bacteria"/>
</dbReference>
<dbReference type="HOGENOM" id="CLU_089475_6_3_9"/>
<dbReference type="Proteomes" id="UP000001374">
    <property type="component" value="Chromosome"/>
</dbReference>
<dbReference type="GO" id="GO:0005829">
    <property type="term" value="C:cytosol"/>
    <property type="evidence" value="ECO:0007669"/>
    <property type="project" value="TreeGrafter"/>
</dbReference>
<dbReference type="GO" id="GO:0043024">
    <property type="term" value="F:ribosomal small subunit binding"/>
    <property type="evidence" value="ECO:0007669"/>
    <property type="project" value="TreeGrafter"/>
</dbReference>
<dbReference type="GO" id="GO:0030490">
    <property type="term" value="P:maturation of SSU-rRNA"/>
    <property type="evidence" value="ECO:0007669"/>
    <property type="project" value="UniProtKB-UniRule"/>
</dbReference>
<dbReference type="FunFam" id="3.30.300.20:FF:000030">
    <property type="entry name" value="Ribosome-binding factor A"/>
    <property type="match status" value="1"/>
</dbReference>
<dbReference type="Gene3D" id="3.30.300.20">
    <property type="match status" value="1"/>
</dbReference>
<dbReference type="HAMAP" id="MF_00003">
    <property type="entry name" value="RbfA"/>
    <property type="match status" value="1"/>
</dbReference>
<dbReference type="InterPro" id="IPR015946">
    <property type="entry name" value="KH_dom-like_a/b"/>
</dbReference>
<dbReference type="InterPro" id="IPR000238">
    <property type="entry name" value="RbfA"/>
</dbReference>
<dbReference type="InterPro" id="IPR023799">
    <property type="entry name" value="RbfA_dom_sf"/>
</dbReference>
<dbReference type="InterPro" id="IPR020053">
    <property type="entry name" value="Ribosome-bd_factorA_CS"/>
</dbReference>
<dbReference type="NCBIfam" id="TIGR00082">
    <property type="entry name" value="rbfA"/>
    <property type="match status" value="1"/>
</dbReference>
<dbReference type="PANTHER" id="PTHR33515">
    <property type="entry name" value="RIBOSOME-BINDING FACTOR A, CHLOROPLASTIC-RELATED"/>
    <property type="match status" value="1"/>
</dbReference>
<dbReference type="PANTHER" id="PTHR33515:SF1">
    <property type="entry name" value="RIBOSOME-BINDING FACTOR A, CHLOROPLASTIC-RELATED"/>
    <property type="match status" value="1"/>
</dbReference>
<dbReference type="Pfam" id="PF02033">
    <property type="entry name" value="RBFA"/>
    <property type="match status" value="1"/>
</dbReference>
<dbReference type="SUPFAM" id="SSF89919">
    <property type="entry name" value="Ribosome-binding factor A, RbfA"/>
    <property type="match status" value="1"/>
</dbReference>
<dbReference type="PROSITE" id="PS01319">
    <property type="entry name" value="RBFA"/>
    <property type="match status" value="1"/>
</dbReference>
<name>RBFA_CLOBJ</name>
<comment type="function">
    <text evidence="1">One of several proteins that assist in the late maturation steps of the functional core of the 30S ribosomal subunit. Associates with free 30S ribosomal subunits (but not with 30S subunits that are part of 70S ribosomes or polysomes). Required for efficient processing of 16S rRNA. May interact with the 5'-terminal helix region of 16S rRNA.</text>
</comment>
<comment type="subunit">
    <text evidence="1">Monomer. Binds 30S ribosomal subunits, but not 50S ribosomal subunits or 70S ribosomes.</text>
</comment>
<comment type="subcellular location">
    <subcellularLocation>
        <location evidence="1">Cytoplasm</location>
    </subcellularLocation>
</comment>
<comment type="similarity">
    <text evidence="1">Belongs to the RbfA family.</text>
</comment>
<evidence type="ECO:0000255" key="1">
    <source>
        <dbReference type="HAMAP-Rule" id="MF_00003"/>
    </source>
</evidence>
<accession>C1FS58</accession>